<comment type="subcellular location">
    <subcellularLocation>
        <location evidence="2">Secreted</location>
    </subcellularLocation>
</comment>
<comment type="allergen">
    <text evidence="2">Causes an allergic reaction in human. Binds to IgE. A.simplex is a fish parasite that, when accidentally ingested by humans, may cause allergic reactions in sensitized individuals.</text>
</comment>
<feature type="signal peptide" evidence="2">
    <location>
        <begin position="1"/>
        <end position="23"/>
    </location>
</feature>
<feature type="chain" id="PRO_0000016888" description="Major allergen Ani s 1">
    <location>
        <begin position="24"/>
        <end position="194"/>
    </location>
</feature>
<feature type="domain" description="BPTI/Kunitz inhibitor" evidence="1">
    <location>
        <begin position="28"/>
        <end position="84"/>
    </location>
</feature>
<feature type="domain" description="WR1">
    <location>
        <begin position="90"/>
        <end position="134"/>
    </location>
</feature>
<feature type="disulfide bond" evidence="1">
    <location>
        <begin position="28"/>
        <end position="84"/>
    </location>
</feature>
<feature type="disulfide bond" evidence="1">
    <location>
        <begin position="38"/>
        <end position="67"/>
    </location>
</feature>
<feature type="disulfide bond" evidence="1">
    <location>
        <begin position="59"/>
        <end position="80"/>
    </location>
</feature>
<feature type="sequence conflict" description="In Ref. 2; AA sequence." evidence="3" ref="2">
    <original>P</original>
    <variation>Q</variation>
    <location>
        <position position="37"/>
    </location>
</feature>
<protein>
    <recommendedName>
        <fullName>Major allergen Ani s 1</fullName>
    </recommendedName>
    <alternativeName>
        <fullName>21 kDa allergen</fullName>
    </alternativeName>
    <alternativeName>
        <fullName>Excretory gland allergen Ans1</fullName>
    </alternativeName>
    <allergenName>Ani s 1</allergenName>
</protein>
<proteinExistence type="evidence at protein level"/>
<name>ANIS1_ANISI</name>
<sequence>MASMQHFSLAALLLAASICLGDADRTECQLPLDKGTPCTQEGGVKPSVAWWHDDKSGICLSFKYTGCGGNANRFTTIKNCEQHCKMPDRGACALGKKPAEDSNGEQLVCAGMREDKCPNGYQCKMMAFMGLCCPTKEEELFAREYEGVCKSGKPVKMDRGSGWMMTILGKSCDDQFCPEDAKCERGKLFANCCK</sequence>
<accession>Q7Z1K3</accession>
<accession>Q7M4A7</accession>
<reference key="1">
    <citation type="submission" date="2003-06" db="EMBL/GenBank/DDBJ databases">
        <title>Purification and molecular cloning of a majpr allergen from Anisakis simplex.</title>
        <authorList>
            <person name="Shimakura K."/>
            <person name="Miura H."/>
            <person name="Ikeda K."/>
            <person name="Ishizaki S."/>
            <person name="Nagashima Y."/>
            <person name="Shiomi K."/>
            <person name="Shirai T."/>
            <person name="Kasuya S."/>
        </authorList>
    </citation>
    <scope>NUCLEOTIDE SEQUENCE [MRNA]</scope>
</reference>
<reference key="2">
    <citation type="journal article" date="2000" name="J. Allergy Clin. Immunol.">
        <title>Isolation and characterization of a major allergen from the fish parasite Anisakis simplex.</title>
        <authorList>
            <person name="Moneo I."/>
            <person name="Caballero M.L."/>
            <person name="Gomez F."/>
            <person name="Ortega E."/>
            <person name="Alonso M.J."/>
        </authorList>
    </citation>
    <scope>PROTEIN SEQUENCE OF 24-40</scope>
    <scope>SUBCELLULAR LOCATION</scope>
    <scope>ALLERGEN</scope>
</reference>
<organism>
    <name type="scientific">Anisakis simplex</name>
    <name type="common">Herring worm</name>
    <dbReference type="NCBI Taxonomy" id="6269"/>
    <lineage>
        <taxon>Eukaryota</taxon>
        <taxon>Metazoa</taxon>
        <taxon>Ecdysozoa</taxon>
        <taxon>Nematoda</taxon>
        <taxon>Chromadorea</taxon>
        <taxon>Rhabditida</taxon>
        <taxon>Spirurina</taxon>
        <taxon>Ascaridomorpha</taxon>
        <taxon>Ascaridoidea</taxon>
        <taxon>Anisakidae</taxon>
        <taxon>Anisakis</taxon>
        <taxon>Anisakis simplex complex</taxon>
    </lineage>
</organism>
<dbReference type="EMBL" id="AB100095">
    <property type="protein sequence ID" value="BAC77154.1"/>
    <property type="molecule type" value="mRNA"/>
</dbReference>
<dbReference type="PIR" id="A59069">
    <property type="entry name" value="A59069"/>
</dbReference>
<dbReference type="SMR" id="Q7Z1K3"/>
<dbReference type="Allergome" id="3079">
    <property type="allergen name" value="Ani s 1.0101"/>
</dbReference>
<dbReference type="Allergome" id="35">
    <property type="allergen name" value="Ani s 1"/>
</dbReference>
<dbReference type="MEROPS" id="I02.968"/>
<dbReference type="GO" id="GO:0005576">
    <property type="term" value="C:extracellular region"/>
    <property type="evidence" value="ECO:0007669"/>
    <property type="project" value="UniProtKB-SubCell"/>
</dbReference>
<dbReference type="GO" id="GO:0004867">
    <property type="term" value="F:serine-type endopeptidase inhibitor activity"/>
    <property type="evidence" value="ECO:0007669"/>
    <property type="project" value="UniProtKB-KW"/>
</dbReference>
<dbReference type="Gene3D" id="4.10.410.10">
    <property type="entry name" value="Pancreatic trypsin inhibitor Kunitz domain"/>
    <property type="match status" value="1"/>
</dbReference>
<dbReference type="InterPro" id="IPR052861">
    <property type="entry name" value="BPTI/Kunitz_domain"/>
</dbReference>
<dbReference type="InterPro" id="IPR006150">
    <property type="entry name" value="Cys_repeat_1"/>
</dbReference>
<dbReference type="InterPro" id="IPR002223">
    <property type="entry name" value="Kunitz_BPTI"/>
</dbReference>
<dbReference type="InterPro" id="IPR036880">
    <property type="entry name" value="Kunitz_BPTI_sf"/>
</dbReference>
<dbReference type="InterPro" id="IPR028150">
    <property type="entry name" value="Lustrin_cystein"/>
</dbReference>
<dbReference type="InterPro" id="IPR020901">
    <property type="entry name" value="Prtase_inh_Kunz-CS"/>
</dbReference>
<dbReference type="PANTHER" id="PTHR47248:SF9">
    <property type="entry name" value="BPTI_KUNITZ INHIBITOR DOMAIN-CONTAINING PROTEIN"/>
    <property type="match status" value="1"/>
</dbReference>
<dbReference type="PANTHER" id="PTHR47248">
    <property type="entry name" value="PROTEIN CBG06772"/>
    <property type="match status" value="1"/>
</dbReference>
<dbReference type="Pfam" id="PF00014">
    <property type="entry name" value="Kunitz_BPTI"/>
    <property type="match status" value="1"/>
</dbReference>
<dbReference type="Pfam" id="PF14625">
    <property type="entry name" value="Lustrin_cystein"/>
    <property type="match status" value="1"/>
</dbReference>
<dbReference type="PRINTS" id="PR00759">
    <property type="entry name" value="BASICPTASE"/>
</dbReference>
<dbReference type="SMART" id="SM00131">
    <property type="entry name" value="KU"/>
    <property type="match status" value="1"/>
</dbReference>
<dbReference type="SMART" id="SM00289">
    <property type="entry name" value="WR1"/>
    <property type="match status" value="2"/>
</dbReference>
<dbReference type="SUPFAM" id="SSF57362">
    <property type="entry name" value="BPTI-like"/>
    <property type="match status" value="1"/>
</dbReference>
<dbReference type="PROSITE" id="PS00280">
    <property type="entry name" value="BPTI_KUNITZ_1"/>
    <property type="match status" value="1"/>
</dbReference>
<dbReference type="PROSITE" id="PS50279">
    <property type="entry name" value="BPTI_KUNITZ_2"/>
    <property type="match status" value="1"/>
</dbReference>
<evidence type="ECO:0000255" key="1">
    <source>
        <dbReference type="PROSITE-ProRule" id="PRU00031"/>
    </source>
</evidence>
<evidence type="ECO:0000269" key="2">
    <source>
    </source>
</evidence>
<evidence type="ECO:0000305" key="3"/>
<keyword id="KW-0020">Allergen</keyword>
<keyword id="KW-0903">Direct protein sequencing</keyword>
<keyword id="KW-1015">Disulfide bond</keyword>
<keyword id="KW-0646">Protease inhibitor</keyword>
<keyword id="KW-0964">Secreted</keyword>
<keyword id="KW-0722">Serine protease inhibitor</keyword>
<keyword id="KW-0732">Signal</keyword>